<sequence length="373" mass="41496">MPPCPPQPNRNRLPQLPTGELGEMELTWQEIMSITELQGLNVPSEPSFEPQAPTPYPGPLPPPTYCPCSIHPDAGFTLPPPPYELPASTPHAPDLPYSYGNIAIPVSKPLTLSGLLNEPLPDPLALLDIGLPVGQPKPQEDPESDSGLSLNYSDAESLELEGTEAGRRRSEYVDMYPVEYPYSLMPNSLAHPNYTLPPTETPLVLESSSGPVRAKPAVRGEAGSRDERRALAMKIPFPTDKIVNLPVDDFNELLAQYPLTESQLALVRDIRRRGKNKVAAQNCRKRKLETIVQLERELERLGSERERLLRARGEADRTLEVMRQQLTELYHDIFQHLRDESGNSYSPEEYVLQQAADGAIFLVPRGTKMEATD</sequence>
<organism>
    <name type="scientific">Rattus norvegicus</name>
    <name type="common">Rat</name>
    <dbReference type="NCBI Taxonomy" id="10116"/>
    <lineage>
        <taxon>Eukaryota</taxon>
        <taxon>Metazoa</taxon>
        <taxon>Chordata</taxon>
        <taxon>Craniata</taxon>
        <taxon>Vertebrata</taxon>
        <taxon>Euteleostomi</taxon>
        <taxon>Mammalia</taxon>
        <taxon>Eutheria</taxon>
        <taxon>Euarchontoglires</taxon>
        <taxon>Glires</taxon>
        <taxon>Rodentia</taxon>
        <taxon>Myomorpha</taxon>
        <taxon>Muroidea</taxon>
        <taxon>Muridae</taxon>
        <taxon>Murinae</taxon>
        <taxon>Rattus</taxon>
    </lineage>
</organism>
<gene>
    <name type="primary">Nfe2</name>
</gene>
<dbReference type="EMBL" id="BC078925">
    <property type="protein sequence ID" value="AAH78925.1"/>
    <property type="molecule type" value="mRNA"/>
</dbReference>
<dbReference type="RefSeq" id="NP_001012224.1">
    <property type="nucleotide sequence ID" value="NM_001012224.1"/>
</dbReference>
<dbReference type="RefSeq" id="XP_006242494.1">
    <property type="nucleotide sequence ID" value="XM_006242432.3"/>
</dbReference>
<dbReference type="RefSeq" id="XP_006242495.1">
    <property type="nucleotide sequence ID" value="XM_006242433.3"/>
</dbReference>
<dbReference type="RefSeq" id="XP_017450513.1">
    <property type="nucleotide sequence ID" value="XM_017595024.3"/>
</dbReference>
<dbReference type="RefSeq" id="XP_038935637.1">
    <property type="nucleotide sequence ID" value="XM_039079709.2"/>
</dbReference>
<dbReference type="RefSeq" id="XP_063120145.1">
    <property type="nucleotide sequence ID" value="XM_063264075.1"/>
</dbReference>
<dbReference type="RefSeq" id="XP_063120146.1">
    <property type="nucleotide sequence ID" value="XM_063264076.1"/>
</dbReference>
<dbReference type="SMR" id="Q6AYT2"/>
<dbReference type="FunCoup" id="Q6AYT2">
    <property type="interactions" value="24"/>
</dbReference>
<dbReference type="STRING" id="10116.ENSRNOP00000052156"/>
<dbReference type="PhosphoSitePlus" id="Q6AYT2"/>
<dbReference type="PaxDb" id="10116-ENSRNOP00000052156"/>
<dbReference type="Ensembl" id="ENSRNOT00000055281.4">
    <property type="protein sequence ID" value="ENSRNOP00000052156.3"/>
    <property type="gene ID" value="ENSRNOG00000036837.4"/>
</dbReference>
<dbReference type="GeneID" id="366998"/>
<dbReference type="KEGG" id="rno:366998"/>
<dbReference type="UCSC" id="RGD:1306888">
    <property type="organism name" value="rat"/>
</dbReference>
<dbReference type="AGR" id="RGD:1306888"/>
<dbReference type="CTD" id="4778"/>
<dbReference type="RGD" id="1306888">
    <property type="gene designation" value="Nfe2"/>
</dbReference>
<dbReference type="eggNOG" id="KOG3863">
    <property type="taxonomic scope" value="Eukaryota"/>
</dbReference>
<dbReference type="GeneTree" id="ENSGT00950000182892"/>
<dbReference type="HOGENOM" id="CLU_058451_0_0_1"/>
<dbReference type="InParanoid" id="Q6AYT2"/>
<dbReference type="OrthoDB" id="77266at9989"/>
<dbReference type="PhylomeDB" id="Q6AYT2"/>
<dbReference type="Reactome" id="R-RNO-983231">
    <property type="pathway name" value="Factors involved in megakaryocyte development and platelet production"/>
</dbReference>
<dbReference type="PRO" id="PR:Q6AYT2"/>
<dbReference type="Proteomes" id="UP000002494">
    <property type="component" value="Chromosome 7"/>
</dbReference>
<dbReference type="Bgee" id="ENSRNOG00000036837">
    <property type="expression patterns" value="Expressed in spleen and 14 other cell types or tissues"/>
</dbReference>
<dbReference type="GO" id="GO:0005737">
    <property type="term" value="C:cytoplasm"/>
    <property type="evidence" value="ECO:0007669"/>
    <property type="project" value="UniProtKB-SubCell"/>
</dbReference>
<dbReference type="GO" id="GO:0005634">
    <property type="term" value="C:nucleus"/>
    <property type="evidence" value="ECO:0000266"/>
    <property type="project" value="RGD"/>
</dbReference>
<dbReference type="GO" id="GO:0016605">
    <property type="term" value="C:PML body"/>
    <property type="evidence" value="ECO:0007669"/>
    <property type="project" value="UniProtKB-SubCell"/>
</dbReference>
<dbReference type="GO" id="GO:0032993">
    <property type="term" value="C:protein-DNA complex"/>
    <property type="evidence" value="ECO:0000266"/>
    <property type="project" value="RGD"/>
</dbReference>
<dbReference type="GO" id="GO:0090575">
    <property type="term" value="C:RNA polymerase II transcription regulator complex"/>
    <property type="evidence" value="ECO:0000266"/>
    <property type="project" value="RGD"/>
</dbReference>
<dbReference type="GO" id="GO:0003677">
    <property type="term" value="F:DNA binding"/>
    <property type="evidence" value="ECO:0000266"/>
    <property type="project" value="RGD"/>
</dbReference>
<dbReference type="GO" id="GO:0000981">
    <property type="term" value="F:DNA-binding transcription factor activity, RNA polymerase II-specific"/>
    <property type="evidence" value="ECO:0000318"/>
    <property type="project" value="GO_Central"/>
</dbReference>
<dbReference type="GO" id="GO:0042802">
    <property type="term" value="F:identical protein binding"/>
    <property type="evidence" value="ECO:0000266"/>
    <property type="project" value="RGD"/>
</dbReference>
<dbReference type="GO" id="GO:0000978">
    <property type="term" value="F:RNA polymerase II cis-regulatory region sequence-specific DNA binding"/>
    <property type="evidence" value="ECO:0000318"/>
    <property type="project" value="GO_Central"/>
</dbReference>
<dbReference type="GO" id="GO:1990837">
    <property type="term" value="F:sequence-specific double-stranded DNA binding"/>
    <property type="evidence" value="ECO:0000266"/>
    <property type="project" value="RGD"/>
</dbReference>
<dbReference type="GO" id="GO:0050699">
    <property type="term" value="F:WW domain binding"/>
    <property type="evidence" value="ECO:0000266"/>
    <property type="project" value="RGD"/>
</dbReference>
<dbReference type="GO" id="GO:0030282">
    <property type="term" value="P:bone mineralization"/>
    <property type="evidence" value="ECO:0000266"/>
    <property type="project" value="RGD"/>
</dbReference>
<dbReference type="GO" id="GO:0008283">
    <property type="term" value="P:cell population proliferation"/>
    <property type="evidence" value="ECO:0000266"/>
    <property type="project" value="RGD"/>
</dbReference>
<dbReference type="GO" id="GO:0007267">
    <property type="term" value="P:cell-cell signaling"/>
    <property type="evidence" value="ECO:0000266"/>
    <property type="project" value="RGD"/>
</dbReference>
<dbReference type="GO" id="GO:0010467">
    <property type="term" value="P:gene expression"/>
    <property type="evidence" value="ECO:0000266"/>
    <property type="project" value="RGD"/>
</dbReference>
<dbReference type="GO" id="GO:0060716">
    <property type="term" value="P:labyrinthine layer blood vessel development"/>
    <property type="evidence" value="ECO:0000266"/>
    <property type="project" value="RGD"/>
</dbReference>
<dbReference type="GO" id="GO:0030502">
    <property type="term" value="P:negative regulation of bone mineralization"/>
    <property type="evidence" value="ECO:0000266"/>
    <property type="project" value="RGD"/>
</dbReference>
<dbReference type="GO" id="GO:0008285">
    <property type="term" value="P:negative regulation of cell population proliferation"/>
    <property type="evidence" value="ECO:0000266"/>
    <property type="project" value="RGD"/>
</dbReference>
<dbReference type="GO" id="GO:0034242">
    <property type="term" value="P:negative regulation of syncytium formation by plasma membrane fusion"/>
    <property type="evidence" value="ECO:0000266"/>
    <property type="project" value="RGD"/>
</dbReference>
<dbReference type="GO" id="GO:0010468">
    <property type="term" value="P:regulation of gene expression"/>
    <property type="evidence" value="ECO:0000266"/>
    <property type="project" value="RGD"/>
</dbReference>
<dbReference type="GO" id="GO:0006357">
    <property type="term" value="P:regulation of transcription by RNA polymerase II"/>
    <property type="evidence" value="ECO:0000318"/>
    <property type="project" value="GO_Central"/>
</dbReference>
<dbReference type="GO" id="GO:0000768">
    <property type="term" value="P:syncytium formation by plasma membrane fusion"/>
    <property type="evidence" value="ECO:0000266"/>
    <property type="project" value="RGD"/>
</dbReference>
<dbReference type="CDD" id="cd14720">
    <property type="entry name" value="bZIP_NFE2-like"/>
    <property type="match status" value="1"/>
</dbReference>
<dbReference type="Gene3D" id="1.10.880.10">
    <property type="entry name" value="Transcription factor, Skn-1-like, DNA-binding domain"/>
    <property type="match status" value="1"/>
</dbReference>
<dbReference type="InterPro" id="IPR004827">
    <property type="entry name" value="bZIP"/>
</dbReference>
<dbReference type="InterPro" id="IPR004826">
    <property type="entry name" value="bZIP_Maf"/>
</dbReference>
<dbReference type="InterPro" id="IPR046347">
    <property type="entry name" value="bZIP_sf"/>
</dbReference>
<dbReference type="InterPro" id="IPR047167">
    <property type="entry name" value="NFE2-like"/>
</dbReference>
<dbReference type="InterPro" id="IPR008917">
    <property type="entry name" value="TF_DNA-bd_sf"/>
</dbReference>
<dbReference type="PANTHER" id="PTHR24411">
    <property type="entry name" value="NUCLEAR FACTOR ERYTHROID 2-RELATED FACTOR"/>
    <property type="match status" value="1"/>
</dbReference>
<dbReference type="PANTHER" id="PTHR24411:SF26">
    <property type="entry name" value="TRANSCRIPTION FACTOR NF-E2 45 KDA SUBUNIT"/>
    <property type="match status" value="1"/>
</dbReference>
<dbReference type="Pfam" id="PF03131">
    <property type="entry name" value="bZIP_Maf"/>
    <property type="match status" value="1"/>
</dbReference>
<dbReference type="SMART" id="SM00338">
    <property type="entry name" value="BRLZ"/>
    <property type="match status" value="1"/>
</dbReference>
<dbReference type="SUPFAM" id="SSF47454">
    <property type="entry name" value="A DNA-binding domain in eukaryotic transcription factors"/>
    <property type="match status" value="1"/>
</dbReference>
<dbReference type="SUPFAM" id="SSF57959">
    <property type="entry name" value="Leucine zipper domain"/>
    <property type="match status" value="1"/>
</dbReference>
<dbReference type="PROSITE" id="PS50217">
    <property type="entry name" value="BZIP"/>
    <property type="match status" value="1"/>
</dbReference>
<dbReference type="PROSITE" id="PS00036">
    <property type="entry name" value="BZIP_BASIC"/>
    <property type="match status" value="1"/>
</dbReference>
<name>NFE2_RAT</name>
<feature type="chain" id="PRO_0000320079" description="Transcription factor NF-E2 45 kDa subunit">
    <location>
        <begin position="1"/>
        <end position="373"/>
    </location>
</feature>
<feature type="domain" description="bZIP" evidence="4">
    <location>
        <begin position="266"/>
        <end position="329"/>
    </location>
</feature>
<feature type="region of interest" description="Transactivation domain" evidence="1">
    <location>
        <begin position="1"/>
        <end position="206"/>
    </location>
</feature>
<feature type="region of interest" description="Required for interaction with MAPK8" evidence="1">
    <location>
        <begin position="1"/>
        <end position="83"/>
    </location>
</feature>
<feature type="region of interest" description="Disordered" evidence="5">
    <location>
        <begin position="1"/>
        <end position="22"/>
    </location>
</feature>
<feature type="region of interest" description="Disordered" evidence="5">
    <location>
        <begin position="40"/>
        <end position="60"/>
    </location>
</feature>
<feature type="region of interest" description="Disordered" evidence="5">
    <location>
        <begin position="131"/>
        <end position="163"/>
    </location>
</feature>
<feature type="region of interest" description="Disordered" evidence="5">
    <location>
        <begin position="206"/>
        <end position="225"/>
    </location>
</feature>
<feature type="region of interest" description="Basic motif" evidence="4">
    <location>
        <begin position="268"/>
        <end position="287"/>
    </location>
</feature>
<feature type="region of interest" description="Leucine-zipper" evidence="4">
    <location>
        <begin position="291"/>
        <end position="298"/>
    </location>
</feature>
<feature type="short sequence motif" description="PXY motif 1">
    <location>
        <begin position="61"/>
        <end position="65"/>
    </location>
</feature>
<feature type="short sequence motif" description="PXY motif 2">
    <location>
        <begin position="79"/>
        <end position="83"/>
    </location>
</feature>
<feature type="modified residue" description="Phosphoserine; by MAPK8" evidence="2">
    <location>
        <position position="157"/>
    </location>
</feature>
<feature type="modified residue" description="Phosphoserine; by PKA" evidence="2">
    <location>
        <position position="170"/>
    </location>
</feature>
<feature type="cross-link" description="Glycyl lysine isopeptide (Lys-Gly) (interchain with G-Cter in SUMO); alternate" evidence="1">
    <location>
        <position position="368"/>
    </location>
</feature>
<feature type="cross-link" description="Glycyl lysine isopeptide (Lys-Gly) (interchain with G-Cter in SUMO1); alternate" evidence="3">
    <location>
        <position position="368"/>
    </location>
</feature>
<protein>
    <recommendedName>
        <fullName>Transcription factor NF-E2 45 kDa subunit</fullName>
    </recommendedName>
    <alternativeName>
        <fullName>Leucine zipper protein NF-E2</fullName>
    </alternativeName>
    <alternativeName>
        <fullName>Nuclear factor, erythroid-derived 2 45 kDa subunit</fullName>
    </alternativeName>
    <alternativeName>
        <fullName>p45 NF-E2</fullName>
    </alternativeName>
</protein>
<evidence type="ECO:0000250" key="1"/>
<evidence type="ECO:0000250" key="2">
    <source>
        <dbReference type="UniProtKB" id="Q07279"/>
    </source>
</evidence>
<evidence type="ECO:0000250" key="3">
    <source>
        <dbReference type="UniProtKB" id="Q16621"/>
    </source>
</evidence>
<evidence type="ECO:0000255" key="4">
    <source>
        <dbReference type="PROSITE-ProRule" id="PRU00978"/>
    </source>
</evidence>
<evidence type="ECO:0000256" key="5">
    <source>
        <dbReference type="SAM" id="MobiDB-lite"/>
    </source>
</evidence>
<evidence type="ECO:0000305" key="6"/>
<reference key="1">
    <citation type="journal article" date="2004" name="Genome Res.">
        <title>The status, quality, and expansion of the NIH full-length cDNA project: the Mammalian Gene Collection (MGC).</title>
        <authorList>
            <consortium name="The MGC Project Team"/>
        </authorList>
    </citation>
    <scope>NUCLEOTIDE SEQUENCE [LARGE SCALE MRNA]</scope>
    <source>
        <tissue>Kidney</tissue>
    </source>
</reference>
<comment type="function">
    <text evidence="1">Component of the NF-E2 complex essential for regulating erythroid and megakaryocytic maturation and differentiation. Binds to the hypersensitive site 2 (HS2) of the beta-globin control region (LCR). This subunit (NFE2) recognizes the TCAT/C sequence of the AP-1-like core palindrome present in a number of erythroid and megakaryocytic gene promoters. Requires MAFK or other small MAF proteins for binding to the NF-E2 motif. May play a role in all aspects of hemoglobin production from globin and heme synthesis to procurement of iron (By similarity).</text>
</comment>
<comment type="subunit">
    <text evidence="1">Homodimer; can bind DNA as a homodimer (By similarity). Erythroid transcription activator nuclear factor erythroid-derived 2 (NF-E2), composed of a heterodimer of NFE2 and MAFK, possesses transactivation activity on beta-globin. Also forms high affinity heterodimer with MAFG; the interaction promotes erythropoiesis. Interacts (via the PXY motif 1) with ITCH (via the WW 1 domain); the interaction promotes 'Lys63'-linked ubiquitination of NFE2, translocates it to the cytoplasm and inhibits its transactivation activity. Interacts with KMT2D/MLL2; the interaction promotes transactivation of the beta-globin locus. Interacts with MAPK8 (phosphorylated form); the interaction leads to phosphorylation of NFE2 in undifferentiated cells (By similarity).</text>
</comment>
<comment type="subcellular location">
    <subcellularLocation>
        <location evidence="1">Nucleus</location>
        <location evidence="1">PML body</location>
    </subcellularLocation>
    <subcellularLocation>
        <location evidence="1">Cytoplasm</location>
    </subcellularLocation>
    <text evidence="1">The sumoylated form locates to the nuclear bodies PML oncogenic domains (PODs). Translocated to the cytoplasm through interaction with ITCH.</text>
</comment>
<comment type="domain">
    <text evidence="1">The PXY motifs are required for binding WW domains. PXY1 is required to promote transactivation of beta-globin and for hyperacetylation of histone H3, but not for binding to the HS2 promoter site.</text>
</comment>
<comment type="PTM">
    <text evidence="1">Phosphorylated on serine residues. In undifferentiated erythrocytes, phosphorylated by MAPK8 which then leads to ubiquitination and protein degradation.</text>
</comment>
<comment type="PTM">
    <text evidence="1">Sumoylated. Sumoylation is required for translocation to nuclear bodies PODs, anchoring to the gene loci, and transactivation of the beta-globin gene.</text>
</comment>
<comment type="PTM">
    <text evidence="1">Ubiquitinated mainly by 'Lys63'-linked ubiquitin. Polyubiquitination with 'Lys63'-linked ubiquitin by ITCH retains NFE2 in the cytoplasm preventing its transactivation activity. In undifferentiated erythrocyte, ubiquitinated after MAPK8-mediatd phosphorylation leading to protein degradation.</text>
</comment>
<comment type="similarity">
    <text evidence="6">Belongs to the bZIP family. CNC subfamily.</text>
</comment>
<accession>Q6AYT2</accession>
<keyword id="KW-0010">Activator</keyword>
<keyword id="KW-0963">Cytoplasm</keyword>
<keyword id="KW-0238">DNA-binding</keyword>
<keyword id="KW-1017">Isopeptide bond</keyword>
<keyword id="KW-0539">Nucleus</keyword>
<keyword id="KW-0597">Phosphoprotein</keyword>
<keyword id="KW-1185">Reference proteome</keyword>
<keyword id="KW-0804">Transcription</keyword>
<keyword id="KW-0805">Transcription regulation</keyword>
<keyword id="KW-0832">Ubl conjugation</keyword>
<proteinExistence type="evidence at transcript level"/>